<reference key="1">
    <citation type="journal article" date="2009" name="Appl. Environ. Microbiol.">
        <title>Three genomes from the phylum Acidobacteria provide insight into the lifestyles of these microorganisms in soils.</title>
        <authorList>
            <person name="Ward N.L."/>
            <person name="Challacombe J.F."/>
            <person name="Janssen P.H."/>
            <person name="Henrissat B."/>
            <person name="Coutinho P.M."/>
            <person name="Wu M."/>
            <person name="Xie G."/>
            <person name="Haft D.H."/>
            <person name="Sait M."/>
            <person name="Badger J."/>
            <person name="Barabote R.D."/>
            <person name="Bradley B."/>
            <person name="Brettin T.S."/>
            <person name="Brinkac L.M."/>
            <person name="Bruce D."/>
            <person name="Creasy T."/>
            <person name="Daugherty S.C."/>
            <person name="Davidsen T.M."/>
            <person name="DeBoy R.T."/>
            <person name="Detter J.C."/>
            <person name="Dodson R.J."/>
            <person name="Durkin A.S."/>
            <person name="Ganapathy A."/>
            <person name="Gwinn-Giglio M."/>
            <person name="Han C.S."/>
            <person name="Khouri H."/>
            <person name="Kiss H."/>
            <person name="Kothari S.P."/>
            <person name="Madupu R."/>
            <person name="Nelson K.E."/>
            <person name="Nelson W.C."/>
            <person name="Paulsen I."/>
            <person name="Penn K."/>
            <person name="Ren Q."/>
            <person name="Rosovitz M.J."/>
            <person name="Selengut J.D."/>
            <person name="Shrivastava S."/>
            <person name="Sullivan S.A."/>
            <person name="Tapia R."/>
            <person name="Thompson L.S."/>
            <person name="Watkins K.L."/>
            <person name="Yang Q."/>
            <person name="Yu C."/>
            <person name="Zafar N."/>
            <person name="Zhou L."/>
            <person name="Kuske C.R."/>
        </authorList>
    </citation>
    <scope>NUCLEOTIDE SEQUENCE [LARGE SCALE GENOMIC DNA]</scope>
    <source>
        <strain>Ellin6076</strain>
    </source>
</reference>
<sequence length="199" mass="20885">MILKVCGITTQWDADAAIAAGATAIGFNFYPKSPRFVTPEIAAAITTKGARRVGVFVNERPARVEEIARIAALDVAQLHGDEGPGDYPGALTVWKAARVTPNFDFAQYDESPAEALLLDGPAAELYGGAGHTFDWTLAAASSHRIIVAGGLDASNVARAVELAHPWGVDSCSRIESAPGKKDIQKMTDFLHAAKAALGA</sequence>
<accession>Q01NI7</accession>
<organism>
    <name type="scientific">Solibacter usitatus (strain Ellin6076)</name>
    <dbReference type="NCBI Taxonomy" id="234267"/>
    <lineage>
        <taxon>Bacteria</taxon>
        <taxon>Pseudomonadati</taxon>
        <taxon>Acidobacteriota</taxon>
        <taxon>Terriglobia</taxon>
        <taxon>Bryobacterales</taxon>
        <taxon>Solibacteraceae</taxon>
        <taxon>Candidatus Solibacter</taxon>
    </lineage>
</organism>
<evidence type="ECO:0000255" key="1">
    <source>
        <dbReference type="HAMAP-Rule" id="MF_00135"/>
    </source>
</evidence>
<gene>
    <name evidence="1" type="primary">trpF</name>
    <name type="ordered locus">Acid_7889</name>
</gene>
<name>TRPF_SOLUE</name>
<dbReference type="EC" id="5.3.1.24" evidence="1"/>
<dbReference type="EMBL" id="CP000473">
    <property type="protein sequence ID" value="ABJ88783.1"/>
    <property type="molecule type" value="Genomic_DNA"/>
</dbReference>
<dbReference type="SMR" id="Q01NI7"/>
<dbReference type="STRING" id="234267.Acid_7889"/>
<dbReference type="KEGG" id="sus:Acid_7889"/>
<dbReference type="eggNOG" id="COG0135">
    <property type="taxonomic scope" value="Bacteria"/>
</dbReference>
<dbReference type="HOGENOM" id="CLU_076364_2_0_0"/>
<dbReference type="InParanoid" id="Q01NI7"/>
<dbReference type="OrthoDB" id="9786954at2"/>
<dbReference type="UniPathway" id="UPA00035">
    <property type="reaction ID" value="UER00042"/>
</dbReference>
<dbReference type="GO" id="GO:0004640">
    <property type="term" value="F:phosphoribosylanthranilate isomerase activity"/>
    <property type="evidence" value="ECO:0007669"/>
    <property type="project" value="UniProtKB-UniRule"/>
</dbReference>
<dbReference type="GO" id="GO:0000162">
    <property type="term" value="P:L-tryptophan biosynthetic process"/>
    <property type="evidence" value="ECO:0007669"/>
    <property type="project" value="UniProtKB-UniRule"/>
</dbReference>
<dbReference type="CDD" id="cd00405">
    <property type="entry name" value="PRAI"/>
    <property type="match status" value="1"/>
</dbReference>
<dbReference type="Gene3D" id="3.20.20.70">
    <property type="entry name" value="Aldolase class I"/>
    <property type="match status" value="1"/>
</dbReference>
<dbReference type="HAMAP" id="MF_00135">
    <property type="entry name" value="PRAI"/>
    <property type="match status" value="1"/>
</dbReference>
<dbReference type="InterPro" id="IPR013785">
    <property type="entry name" value="Aldolase_TIM"/>
</dbReference>
<dbReference type="InterPro" id="IPR001240">
    <property type="entry name" value="PRAI_dom"/>
</dbReference>
<dbReference type="InterPro" id="IPR011060">
    <property type="entry name" value="RibuloseP-bd_barrel"/>
</dbReference>
<dbReference type="InterPro" id="IPR044643">
    <property type="entry name" value="TrpF_fam"/>
</dbReference>
<dbReference type="PANTHER" id="PTHR42894">
    <property type="entry name" value="N-(5'-PHOSPHORIBOSYL)ANTHRANILATE ISOMERASE"/>
    <property type="match status" value="1"/>
</dbReference>
<dbReference type="PANTHER" id="PTHR42894:SF1">
    <property type="entry name" value="N-(5'-PHOSPHORIBOSYL)ANTHRANILATE ISOMERASE"/>
    <property type="match status" value="1"/>
</dbReference>
<dbReference type="Pfam" id="PF00697">
    <property type="entry name" value="PRAI"/>
    <property type="match status" value="1"/>
</dbReference>
<dbReference type="SUPFAM" id="SSF51366">
    <property type="entry name" value="Ribulose-phoshate binding barrel"/>
    <property type="match status" value="1"/>
</dbReference>
<feature type="chain" id="PRO_1000197118" description="N-(5'-phosphoribosyl)anthranilate isomerase">
    <location>
        <begin position="1"/>
        <end position="199"/>
    </location>
</feature>
<comment type="catalytic activity">
    <reaction evidence="1">
        <text>N-(5-phospho-beta-D-ribosyl)anthranilate = 1-(2-carboxyphenylamino)-1-deoxy-D-ribulose 5-phosphate</text>
        <dbReference type="Rhea" id="RHEA:21540"/>
        <dbReference type="ChEBI" id="CHEBI:18277"/>
        <dbReference type="ChEBI" id="CHEBI:58613"/>
        <dbReference type="EC" id="5.3.1.24"/>
    </reaction>
</comment>
<comment type="pathway">
    <text evidence="1">Amino-acid biosynthesis; L-tryptophan biosynthesis; L-tryptophan from chorismate: step 3/5.</text>
</comment>
<comment type="similarity">
    <text evidence="1">Belongs to the TrpF family.</text>
</comment>
<proteinExistence type="inferred from homology"/>
<protein>
    <recommendedName>
        <fullName evidence="1">N-(5'-phosphoribosyl)anthranilate isomerase</fullName>
        <shortName evidence="1">PRAI</shortName>
        <ecNumber evidence="1">5.3.1.24</ecNumber>
    </recommendedName>
</protein>
<keyword id="KW-0028">Amino-acid biosynthesis</keyword>
<keyword id="KW-0057">Aromatic amino acid biosynthesis</keyword>
<keyword id="KW-0413">Isomerase</keyword>
<keyword id="KW-0822">Tryptophan biosynthesis</keyword>